<organism>
    <name type="scientific">Staphylococcus aureus (strain USA300 / TCH1516)</name>
    <dbReference type="NCBI Taxonomy" id="451516"/>
    <lineage>
        <taxon>Bacteria</taxon>
        <taxon>Bacillati</taxon>
        <taxon>Bacillota</taxon>
        <taxon>Bacilli</taxon>
        <taxon>Bacillales</taxon>
        <taxon>Staphylococcaceae</taxon>
        <taxon>Staphylococcus</taxon>
    </lineage>
</organism>
<sequence length="437" mass="49188">MTHYHFVGIKGSGMSSLAQIMHDLGHEVQGSDIENYVFTEVALRNKGIKILPFDANNIKEDMVVIQGNAFASSHEEIVRAHQLKLDVVSYNDFLGQIIDQYTSVAVTGAHGKTSTTGLLSHVMNGDKKTSFLIGDGTGMGLPESDYFAFEACEYRRHFLSYKPDYAIMTNIDFDHPDYFKDINDVFDAFQEMAHNVKKGIIAWGDDEHLRKIEADVPIYYYGFKDSDDIYAQNIQITDKGTAFDVYVDGEFYDHFLSPQYGDHTVLNALAVIAISYLEKLDVTNIKEALETFGGVKRRFNETTIANQVIVDDYAHHPREISATIETARKKYPHKEVVAVFQPHTFSRTQAFLNEFAESLSKADRVFLCEIFGSIRENTGALTIQDLIDKIEGASLINEDSINVLEQFDNAVILFMGAGDIQKLQNAYLDKLGMKNAF</sequence>
<gene>
    <name evidence="1" type="primary">murC</name>
    <name type="ordered locus">USA300HOU_1730</name>
</gene>
<reference key="1">
    <citation type="journal article" date="2007" name="BMC Microbiol.">
        <title>Subtle genetic changes enhance virulence of methicillin resistant and sensitive Staphylococcus aureus.</title>
        <authorList>
            <person name="Highlander S.K."/>
            <person name="Hulten K.G."/>
            <person name="Qin X."/>
            <person name="Jiang H."/>
            <person name="Yerrapragada S."/>
            <person name="Mason E.O. Jr."/>
            <person name="Shang Y."/>
            <person name="Williams T.M."/>
            <person name="Fortunov R.M."/>
            <person name="Liu Y."/>
            <person name="Igboeli O."/>
            <person name="Petrosino J."/>
            <person name="Tirumalai M."/>
            <person name="Uzman A."/>
            <person name="Fox G.E."/>
            <person name="Cardenas A.M."/>
            <person name="Muzny D.M."/>
            <person name="Hemphill L."/>
            <person name="Ding Y."/>
            <person name="Dugan S."/>
            <person name="Blyth P.R."/>
            <person name="Buhay C.J."/>
            <person name="Dinh H.H."/>
            <person name="Hawes A.C."/>
            <person name="Holder M."/>
            <person name="Kovar C.L."/>
            <person name="Lee S.L."/>
            <person name="Liu W."/>
            <person name="Nazareth L.V."/>
            <person name="Wang Q."/>
            <person name="Zhou J."/>
            <person name="Kaplan S.L."/>
            <person name="Weinstock G.M."/>
        </authorList>
    </citation>
    <scope>NUCLEOTIDE SEQUENCE [LARGE SCALE GENOMIC DNA]</scope>
    <source>
        <strain>USA300 / TCH1516</strain>
    </source>
</reference>
<dbReference type="EC" id="6.3.2.8" evidence="1"/>
<dbReference type="EMBL" id="CP000730">
    <property type="protein sequence ID" value="ABX29737.1"/>
    <property type="molecule type" value="Genomic_DNA"/>
</dbReference>
<dbReference type="RefSeq" id="WP_000150168.1">
    <property type="nucleotide sequence ID" value="NC_010079.1"/>
</dbReference>
<dbReference type="SMR" id="A8Z4G7"/>
<dbReference type="KEGG" id="sax:USA300HOU_1730"/>
<dbReference type="HOGENOM" id="CLU_028104_1_0_9"/>
<dbReference type="UniPathway" id="UPA00219"/>
<dbReference type="GO" id="GO:0005737">
    <property type="term" value="C:cytoplasm"/>
    <property type="evidence" value="ECO:0007669"/>
    <property type="project" value="UniProtKB-SubCell"/>
</dbReference>
<dbReference type="GO" id="GO:0005524">
    <property type="term" value="F:ATP binding"/>
    <property type="evidence" value="ECO:0007669"/>
    <property type="project" value="UniProtKB-UniRule"/>
</dbReference>
<dbReference type="GO" id="GO:0008763">
    <property type="term" value="F:UDP-N-acetylmuramate-L-alanine ligase activity"/>
    <property type="evidence" value="ECO:0007669"/>
    <property type="project" value="UniProtKB-UniRule"/>
</dbReference>
<dbReference type="GO" id="GO:0051301">
    <property type="term" value="P:cell division"/>
    <property type="evidence" value="ECO:0007669"/>
    <property type="project" value="UniProtKB-KW"/>
</dbReference>
<dbReference type="GO" id="GO:0071555">
    <property type="term" value="P:cell wall organization"/>
    <property type="evidence" value="ECO:0007669"/>
    <property type="project" value="UniProtKB-KW"/>
</dbReference>
<dbReference type="GO" id="GO:0009252">
    <property type="term" value="P:peptidoglycan biosynthetic process"/>
    <property type="evidence" value="ECO:0007669"/>
    <property type="project" value="UniProtKB-UniRule"/>
</dbReference>
<dbReference type="GO" id="GO:0008360">
    <property type="term" value="P:regulation of cell shape"/>
    <property type="evidence" value="ECO:0007669"/>
    <property type="project" value="UniProtKB-KW"/>
</dbReference>
<dbReference type="Gene3D" id="3.90.190.20">
    <property type="entry name" value="Mur ligase, C-terminal domain"/>
    <property type="match status" value="1"/>
</dbReference>
<dbReference type="Gene3D" id="3.40.1190.10">
    <property type="entry name" value="Mur-like, catalytic domain"/>
    <property type="match status" value="1"/>
</dbReference>
<dbReference type="Gene3D" id="3.40.50.720">
    <property type="entry name" value="NAD(P)-binding Rossmann-like Domain"/>
    <property type="match status" value="1"/>
</dbReference>
<dbReference type="HAMAP" id="MF_00046">
    <property type="entry name" value="MurC"/>
    <property type="match status" value="1"/>
</dbReference>
<dbReference type="InterPro" id="IPR036565">
    <property type="entry name" value="Mur-like_cat_sf"/>
</dbReference>
<dbReference type="InterPro" id="IPR004101">
    <property type="entry name" value="Mur_ligase_C"/>
</dbReference>
<dbReference type="InterPro" id="IPR036615">
    <property type="entry name" value="Mur_ligase_C_dom_sf"/>
</dbReference>
<dbReference type="InterPro" id="IPR013221">
    <property type="entry name" value="Mur_ligase_cen"/>
</dbReference>
<dbReference type="InterPro" id="IPR000713">
    <property type="entry name" value="Mur_ligase_N"/>
</dbReference>
<dbReference type="InterPro" id="IPR050061">
    <property type="entry name" value="MurCDEF_pg_biosynth"/>
</dbReference>
<dbReference type="InterPro" id="IPR005758">
    <property type="entry name" value="UDP-N-AcMur_Ala_ligase_MurC"/>
</dbReference>
<dbReference type="NCBIfam" id="TIGR01082">
    <property type="entry name" value="murC"/>
    <property type="match status" value="1"/>
</dbReference>
<dbReference type="PANTHER" id="PTHR43445:SF3">
    <property type="entry name" value="UDP-N-ACETYLMURAMATE--L-ALANINE LIGASE"/>
    <property type="match status" value="1"/>
</dbReference>
<dbReference type="PANTHER" id="PTHR43445">
    <property type="entry name" value="UDP-N-ACETYLMURAMATE--L-ALANINE LIGASE-RELATED"/>
    <property type="match status" value="1"/>
</dbReference>
<dbReference type="Pfam" id="PF01225">
    <property type="entry name" value="Mur_ligase"/>
    <property type="match status" value="1"/>
</dbReference>
<dbReference type="Pfam" id="PF02875">
    <property type="entry name" value="Mur_ligase_C"/>
    <property type="match status" value="1"/>
</dbReference>
<dbReference type="Pfam" id="PF08245">
    <property type="entry name" value="Mur_ligase_M"/>
    <property type="match status" value="1"/>
</dbReference>
<dbReference type="SUPFAM" id="SSF51984">
    <property type="entry name" value="MurCD N-terminal domain"/>
    <property type="match status" value="1"/>
</dbReference>
<dbReference type="SUPFAM" id="SSF53623">
    <property type="entry name" value="MurD-like peptide ligases, catalytic domain"/>
    <property type="match status" value="1"/>
</dbReference>
<dbReference type="SUPFAM" id="SSF53244">
    <property type="entry name" value="MurD-like peptide ligases, peptide-binding domain"/>
    <property type="match status" value="1"/>
</dbReference>
<evidence type="ECO:0000255" key="1">
    <source>
        <dbReference type="HAMAP-Rule" id="MF_00046"/>
    </source>
</evidence>
<name>MURC_STAAT</name>
<accession>A8Z4G7</accession>
<proteinExistence type="inferred from homology"/>
<protein>
    <recommendedName>
        <fullName evidence="1">UDP-N-acetylmuramate--L-alanine ligase</fullName>
        <ecNumber evidence="1">6.3.2.8</ecNumber>
    </recommendedName>
    <alternativeName>
        <fullName evidence="1">UDP-N-acetylmuramoyl-L-alanine synthetase</fullName>
    </alternativeName>
</protein>
<feature type="chain" id="PRO_1000074759" description="UDP-N-acetylmuramate--L-alanine ligase">
    <location>
        <begin position="1"/>
        <end position="437"/>
    </location>
</feature>
<feature type="binding site" evidence="1">
    <location>
        <begin position="108"/>
        <end position="114"/>
    </location>
    <ligand>
        <name>ATP</name>
        <dbReference type="ChEBI" id="CHEBI:30616"/>
    </ligand>
</feature>
<keyword id="KW-0067">ATP-binding</keyword>
<keyword id="KW-0131">Cell cycle</keyword>
<keyword id="KW-0132">Cell division</keyword>
<keyword id="KW-0133">Cell shape</keyword>
<keyword id="KW-0961">Cell wall biogenesis/degradation</keyword>
<keyword id="KW-0963">Cytoplasm</keyword>
<keyword id="KW-0436">Ligase</keyword>
<keyword id="KW-0547">Nucleotide-binding</keyword>
<keyword id="KW-0573">Peptidoglycan synthesis</keyword>
<comment type="function">
    <text evidence="1">Cell wall formation.</text>
</comment>
<comment type="catalytic activity">
    <reaction evidence="1">
        <text>UDP-N-acetyl-alpha-D-muramate + L-alanine + ATP = UDP-N-acetyl-alpha-D-muramoyl-L-alanine + ADP + phosphate + H(+)</text>
        <dbReference type="Rhea" id="RHEA:23372"/>
        <dbReference type="ChEBI" id="CHEBI:15378"/>
        <dbReference type="ChEBI" id="CHEBI:30616"/>
        <dbReference type="ChEBI" id="CHEBI:43474"/>
        <dbReference type="ChEBI" id="CHEBI:57972"/>
        <dbReference type="ChEBI" id="CHEBI:70757"/>
        <dbReference type="ChEBI" id="CHEBI:83898"/>
        <dbReference type="ChEBI" id="CHEBI:456216"/>
        <dbReference type="EC" id="6.3.2.8"/>
    </reaction>
</comment>
<comment type="pathway">
    <text evidence="1">Cell wall biogenesis; peptidoglycan biosynthesis.</text>
</comment>
<comment type="subcellular location">
    <subcellularLocation>
        <location evidence="1">Cytoplasm</location>
    </subcellularLocation>
</comment>
<comment type="similarity">
    <text evidence="1">Belongs to the MurCDEF family.</text>
</comment>